<reference key="1">
    <citation type="journal article" date="2005" name="Arch. Microbiol.">
        <title>The genome sequence of an anaerobic aromatic-degrading denitrifying bacterium, strain EbN1.</title>
        <authorList>
            <person name="Rabus R."/>
            <person name="Kube M."/>
            <person name="Heider J."/>
            <person name="Beck A."/>
            <person name="Heitmann K."/>
            <person name="Widdel F."/>
            <person name="Reinhardt R."/>
        </authorList>
    </citation>
    <scope>NUCLEOTIDE SEQUENCE [LARGE SCALE GENOMIC DNA]</scope>
    <source>
        <strain>DSM 19018 / LMG 30748 / EbN1</strain>
    </source>
</reference>
<evidence type="ECO:0000255" key="1">
    <source>
        <dbReference type="HAMAP-Rule" id="MF_00151"/>
    </source>
</evidence>
<proteinExistence type="inferred from homology"/>
<feature type="chain" id="PRO_1000058157" description="Phosphopantetheine adenylyltransferase">
    <location>
        <begin position="1"/>
        <end position="163"/>
    </location>
</feature>
<feature type="binding site" evidence="1">
    <location>
        <begin position="11"/>
        <end position="12"/>
    </location>
    <ligand>
        <name>ATP</name>
        <dbReference type="ChEBI" id="CHEBI:30616"/>
    </ligand>
</feature>
<feature type="binding site" evidence="1">
    <location>
        <position position="11"/>
    </location>
    <ligand>
        <name>substrate</name>
    </ligand>
</feature>
<feature type="binding site" evidence="1">
    <location>
        <position position="19"/>
    </location>
    <ligand>
        <name>ATP</name>
        <dbReference type="ChEBI" id="CHEBI:30616"/>
    </ligand>
</feature>
<feature type="binding site" evidence="1">
    <location>
        <position position="43"/>
    </location>
    <ligand>
        <name>substrate</name>
    </ligand>
</feature>
<feature type="binding site" evidence="1">
    <location>
        <position position="75"/>
    </location>
    <ligand>
        <name>substrate</name>
    </ligand>
</feature>
<feature type="binding site" evidence="1">
    <location>
        <position position="89"/>
    </location>
    <ligand>
        <name>substrate</name>
    </ligand>
</feature>
<feature type="binding site" evidence="1">
    <location>
        <begin position="90"/>
        <end position="92"/>
    </location>
    <ligand>
        <name>ATP</name>
        <dbReference type="ChEBI" id="CHEBI:30616"/>
    </ligand>
</feature>
<feature type="binding site" evidence="1">
    <location>
        <position position="100"/>
    </location>
    <ligand>
        <name>ATP</name>
        <dbReference type="ChEBI" id="CHEBI:30616"/>
    </ligand>
</feature>
<feature type="binding site" evidence="1">
    <location>
        <begin position="125"/>
        <end position="131"/>
    </location>
    <ligand>
        <name>ATP</name>
        <dbReference type="ChEBI" id="CHEBI:30616"/>
    </ligand>
</feature>
<feature type="site" description="Transition state stabilizer" evidence="1">
    <location>
        <position position="19"/>
    </location>
</feature>
<protein>
    <recommendedName>
        <fullName evidence="1">Phosphopantetheine adenylyltransferase</fullName>
        <ecNumber evidence="1">2.7.7.3</ecNumber>
    </recommendedName>
    <alternativeName>
        <fullName evidence="1">Dephospho-CoA pyrophosphorylase</fullName>
    </alternativeName>
    <alternativeName>
        <fullName evidence="1">Pantetheine-phosphate adenylyltransferase</fullName>
        <shortName evidence="1">PPAT</shortName>
    </alternativeName>
</protein>
<comment type="function">
    <text evidence="1">Reversibly transfers an adenylyl group from ATP to 4'-phosphopantetheine, yielding dephospho-CoA (dPCoA) and pyrophosphate.</text>
</comment>
<comment type="catalytic activity">
    <reaction evidence="1">
        <text>(R)-4'-phosphopantetheine + ATP + H(+) = 3'-dephospho-CoA + diphosphate</text>
        <dbReference type="Rhea" id="RHEA:19801"/>
        <dbReference type="ChEBI" id="CHEBI:15378"/>
        <dbReference type="ChEBI" id="CHEBI:30616"/>
        <dbReference type="ChEBI" id="CHEBI:33019"/>
        <dbReference type="ChEBI" id="CHEBI:57328"/>
        <dbReference type="ChEBI" id="CHEBI:61723"/>
        <dbReference type="EC" id="2.7.7.3"/>
    </reaction>
</comment>
<comment type="cofactor">
    <cofactor evidence="1">
        <name>Mg(2+)</name>
        <dbReference type="ChEBI" id="CHEBI:18420"/>
    </cofactor>
</comment>
<comment type="pathway">
    <text evidence="1">Cofactor biosynthesis; coenzyme A biosynthesis; CoA from (R)-pantothenate: step 4/5.</text>
</comment>
<comment type="subunit">
    <text evidence="1">Homohexamer.</text>
</comment>
<comment type="subcellular location">
    <subcellularLocation>
        <location evidence="1">Cytoplasm</location>
    </subcellularLocation>
</comment>
<comment type="similarity">
    <text evidence="1">Belongs to the bacterial CoaD family.</text>
</comment>
<name>COAD_AROAE</name>
<sequence>MKEGVAIYPGTFDPFTRGHEDLVRRASLLFNKVVVAVAESHGKAPIFTLAERVEIARDVLAPFPNVEVTGFDGLLMDFLRQRDARLILRGLRAVSDFEYEFQMAGMNRKLFPDVETVFLTPAEEYMFISATMVREIARLGGDVSKFVQPAVNERLLQKVSLKR</sequence>
<keyword id="KW-0067">ATP-binding</keyword>
<keyword id="KW-0173">Coenzyme A biosynthesis</keyword>
<keyword id="KW-0963">Cytoplasm</keyword>
<keyword id="KW-0460">Magnesium</keyword>
<keyword id="KW-0547">Nucleotide-binding</keyword>
<keyword id="KW-0548">Nucleotidyltransferase</keyword>
<keyword id="KW-1185">Reference proteome</keyword>
<keyword id="KW-0808">Transferase</keyword>
<dbReference type="EC" id="2.7.7.3" evidence="1"/>
<dbReference type="EMBL" id="CR555306">
    <property type="protein sequence ID" value="CAI06881.1"/>
    <property type="molecule type" value="Genomic_DNA"/>
</dbReference>
<dbReference type="RefSeq" id="WP_011236609.1">
    <property type="nucleotide sequence ID" value="NC_006513.1"/>
</dbReference>
<dbReference type="SMR" id="Q5P730"/>
<dbReference type="STRING" id="76114.ebA1397"/>
<dbReference type="KEGG" id="eba:ebA1397"/>
<dbReference type="eggNOG" id="COG0669">
    <property type="taxonomic scope" value="Bacteria"/>
</dbReference>
<dbReference type="HOGENOM" id="CLU_100149_0_1_4"/>
<dbReference type="OrthoDB" id="9806661at2"/>
<dbReference type="UniPathway" id="UPA00241">
    <property type="reaction ID" value="UER00355"/>
</dbReference>
<dbReference type="Proteomes" id="UP000006552">
    <property type="component" value="Chromosome"/>
</dbReference>
<dbReference type="GO" id="GO:0005737">
    <property type="term" value="C:cytoplasm"/>
    <property type="evidence" value="ECO:0007669"/>
    <property type="project" value="UniProtKB-SubCell"/>
</dbReference>
<dbReference type="GO" id="GO:0005524">
    <property type="term" value="F:ATP binding"/>
    <property type="evidence" value="ECO:0007669"/>
    <property type="project" value="UniProtKB-KW"/>
</dbReference>
<dbReference type="GO" id="GO:0004595">
    <property type="term" value="F:pantetheine-phosphate adenylyltransferase activity"/>
    <property type="evidence" value="ECO:0007669"/>
    <property type="project" value="UniProtKB-UniRule"/>
</dbReference>
<dbReference type="GO" id="GO:0015937">
    <property type="term" value="P:coenzyme A biosynthetic process"/>
    <property type="evidence" value="ECO:0007669"/>
    <property type="project" value="UniProtKB-UniRule"/>
</dbReference>
<dbReference type="CDD" id="cd02163">
    <property type="entry name" value="PPAT"/>
    <property type="match status" value="1"/>
</dbReference>
<dbReference type="Gene3D" id="3.40.50.620">
    <property type="entry name" value="HUPs"/>
    <property type="match status" value="1"/>
</dbReference>
<dbReference type="HAMAP" id="MF_00151">
    <property type="entry name" value="PPAT_bact"/>
    <property type="match status" value="1"/>
</dbReference>
<dbReference type="InterPro" id="IPR004821">
    <property type="entry name" value="Cyt_trans-like"/>
</dbReference>
<dbReference type="InterPro" id="IPR001980">
    <property type="entry name" value="PPAT"/>
</dbReference>
<dbReference type="InterPro" id="IPR014729">
    <property type="entry name" value="Rossmann-like_a/b/a_fold"/>
</dbReference>
<dbReference type="NCBIfam" id="TIGR01510">
    <property type="entry name" value="coaD_prev_kdtB"/>
    <property type="match status" value="1"/>
</dbReference>
<dbReference type="NCBIfam" id="TIGR00125">
    <property type="entry name" value="cyt_tran_rel"/>
    <property type="match status" value="1"/>
</dbReference>
<dbReference type="PANTHER" id="PTHR21342">
    <property type="entry name" value="PHOSPHOPANTETHEINE ADENYLYLTRANSFERASE"/>
    <property type="match status" value="1"/>
</dbReference>
<dbReference type="PANTHER" id="PTHR21342:SF1">
    <property type="entry name" value="PHOSPHOPANTETHEINE ADENYLYLTRANSFERASE"/>
    <property type="match status" value="1"/>
</dbReference>
<dbReference type="Pfam" id="PF01467">
    <property type="entry name" value="CTP_transf_like"/>
    <property type="match status" value="1"/>
</dbReference>
<dbReference type="PRINTS" id="PR01020">
    <property type="entry name" value="LPSBIOSNTHSS"/>
</dbReference>
<dbReference type="SUPFAM" id="SSF52374">
    <property type="entry name" value="Nucleotidylyl transferase"/>
    <property type="match status" value="1"/>
</dbReference>
<gene>
    <name evidence="1" type="primary">coaD</name>
    <name type="ordered locus">AZOSEA07580</name>
    <name type="ORF">ebA1397</name>
</gene>
<organism>
    <name type="scientific">Aromatoleum aromaticum (strain DSM 19018 / LMG 30748 / EbN1)</name>
    <name type="common">Azoarcus sp. (strain EbN1)</name>
    <dbReference type="NCBI Taxonomy" id="76114"/>
    <lineage>
        <taxon>Bacteria</taxon>
        <taxon>Pseudomonadati</taxon>
        <taxon>Pseudomonadota</taxon>
        <taxon>Betaproteobacteria</taxon>
        <taxon>Rhodocyclales</taxon>
        <taxon>Rhodocyclaceae</taxon>
        <taxon>Aromatoleum</taxon>
    </lineage>
</organism>
<accession>Q5P730</accession>